<gene>
    <name evidence="1" type="primary">tgt</name>
    <name type="ordered locus">NMCC_0678</name>
</gene>
<protein>
    <recommendedName>
        <fullName evidence="1">Queuine tRNA-ribosyltransferase</fullName>
        <ecNumber evidence="1">2.4.2.29</ecNumber>
    </recommendedName>
    <alternativeName>
        <fullName evidence="1">Guanine insertion enzyme</fullName>
    </alternativeName>
    <alternativeName>
        <fullName evidence="1">tRNA-guanine transglycosylase</fullName>
    </alternativeName>
</protein>
<evidence type="ECO:0000255" key="1">
    <source>
        <dbReference type="HAMAP-Rule" id="MF_00168"/>
    </source>
</evidence>
<proteinExistence type="inferred from homology"/>
<comment type="function">
    <text evidence="1">Catalyzes the base-exchange of a guanine (G) residue with the queuine precursor 7-aminomethyl-7-deazaguanine (PreQ1) at position 34 (anticodon wobble position) in tRNAs with GU(N) anticodons (tRNA-Asp, -Asn, -His and -Tyr). Catalysis occurs through a double-displacement mechanism. The nucleophile active site attacks the C1' of nucleotide 34 to detach the guanine base from the RNA, forming a covalent enzyme-RNA intermediate. The proton acceptor active site deprotonates the incoming PreQ1, allowing a nucleophilic attack on the C1' of the ribose to form the product. After dissociation, two additional enzymatic reactions on the tRNA convert PreQ1 to queuine (Q), resulting in the hypermodified nucleoside queuosine (7-(((4,5-cis-dihydroxy-2-cyclopenten-1-yl)amino)methyl)-7-deazaguanosine).</text>
</comment>
<comment type="catalytic activity">
    <reaction evidence="1">
        <text>7-aminomethyl-7-carbaguanine + guanosine(34) in tRNA = 7-aminomethyl-7-carbaguanosine(34) in tRNA + guanine</text>
        <dbReference type="Rhea" id="RHEA:24104"/>
        <dbReference type="Rhea" id="RHEA-COMP:10341"/>
        <dbReference type="Rhea" id="RHEA-COMP:10342"/>
        <dbReference type="ChEBI" id="CHEBI:16235"/>
        <dbReference type="ChEBI" id="CHEBI:58703"/>
        <dbReference type="ChEBI" id="CHEBI:74269"/>
        <dbReference type="ChEBI" id="CHEBI:82833"/>
        <dbReference type="EC" id="2.4.2.29"/>
    </reaction>
</comment>
<comment type="cofactor">
    <cofactor evidence="1">
        <name>Zn(2+)</name>
        <dbReference type="ChEBI" id="CHEBI:29105"/>
    </cofactor>
    <text evidence="1">Binds 1 zinc ion per subunit.</text>
</comment>
<comment type="pathway">
    <text evidence="1">tRNA modification; tRNA-queuosine biosynthesis.</text>
</comment>
<comment type="subunit">
    <text evidence="1">Homodimer. Within each dimer, one monomer is responsible for RNA recognition and catalysis, while the other monomer binds to the replacement base PreQ1.</text>
</comment>
<comment type="similarity">
    <text evidence="1">Belongs to the queuine tRNA-ribosyltransferase family.</text>
</comment>
<reference key="1">
    <citation type="journal article" date="2008" name="Genomics">
        <title>Characterization of ST-4821 complex, a unique Neisseria meningitidis clone.</title>
        <authorList>
            <person name="Peng J."/>
            <person name="Yang L."/>
            <person name="Yang F."/>
            <person name="Yang J."/>
            <person name="Yan Y."/>
            <person name="Nie H."/>
            <person name="Zhang X."/>
            <person name="Xiong Z."/>
            <person name="Jiang Y."/>
            <person name="Cheng F."/>
            <person name="Xu X."/>
            <person name="Chen S."/>
            <person name="Sun L."/>
            <person name="Li W."/>
            <person name="Shen Y."/>
            <person name="Shao Z."/>
            <person name="Liang X."/>
            <person name="Xu J."/>
            <person name="Jin Q."/>
        </authorList>
    </citation>
    <scope>NUCLEOTIDE SEQUENCE [LARGE SCALE GENOMIC DNA]</scope>
    <source>
        <strain>053442</strain>
    </source>
</reference>
<dbReference type="EC" id="2.4.2.29" evidence="1"/>
<dbReference type="EMBL" id="CP000381">
    <property type="protein sequence ID" value="ABX72874.1"/>
    <property type="molecule type" value="Genomic_DNA"/>
</dbReference>
<dbReference type="RefSeq" id="WP_002258515.1">
    <property type="nucleotide sequence ID" value="NC_010120.1"/>
</dbReference>
<dbReference type="SMR" id="A9M374"/>
<dbReference type="KEGG" id="nmn:NMCC_0678"/>
<dbReference type="HOGENOM" id="CLU_022060_0_1_4"/>
<dbReference type="UniPathway" id="UPA00392"/>
<dbReference type="Proteomes" id="UP000001177">
    <property type="component" value="Chromosome"/>
</dbReference>
<dbReference type="GO" id="GO:0005829">
    <property type="term" value="C:cytosol"/>
    <property type="evidence" value="ECO:0007669"/>
    <property type="project" value="TreeGrafter"/>
</dbReference>
<dbReference type="GO" id="GO:0046872">
    <property type="term" value="F:metal ion binding"/>
    <property type="evidence" value="ECO:0007669"/>
    <property type="project" value="UniProtKB-KW"/>
</dbReference>
<dbReference type="GO" id="GO:0008479">
    <property type="term" value="F:tRNA-guanosine(34) queuine transglycosylase activity"/>
    <property type="evidence" value="ECO:0007669"/>
    <property type="project" value="UniProtKB-UniRule"/>
</dbReference>
<dbReference type="GO" id="GO:0008616">
    <property type="term" value="P:queuosine biosynthetic process"/>
    <property type="evidence" value="ECO:0007669"/>
    <property type="project" value="UniProtKB-UniRule"/>
</dbReference>
<dbReference type="GO" id="GO:0002099">
    <property type="term" value="P:tRNA wobble guanine modification"/>
    <property type="evidence" value="ECO:0007669"/>
    <property type="project" value="TreeGrafter"/>
</dbReference>
<dbReference type="GO" id="GO:0101030">
    <property type="term" value="P:tRNA-guanine transglycosylation"/>
    <property type="evidence" value="ECO:0007669"/>
    <property type="project" value="InterPro"/>
</dbReference>
<dbReference type="FunFam" id="3.20.20.105:FF:000001">
    <property type="entry name" value="Queuine tRNA-ribosyltransferase"/>
    <property type="match status" value="1"/>
</dbReference>
<dbReference type="Gene3D" id="3.20.20.105">
    <property type="entry name" value="Queuine tRNA-ribosyltransferase-like"/>
    <property type="match status" value="1"/>
</dbReference>
<dbReference type="HAMAP" id="MF_00168">
    <property type="entry name" value="Q_tRNA_Tgt"/>
    <property type="match status" value="1"/>
</dbReference>
<dbReference type="InterPro" id="IPR050076">
    <property type="entry name" value="ArchSynthase1/Queuine_TRR"/>
</dbReference>
<dbReference type="InterPro" id="IPR004803">
    <property type="entry name" value="TGT"/>
</dbReference>
<dbReference type="InterPro" id="IPR036511">
    <property type="entry name" value="TGT-like_sf"/>
</dbReference>
<dbReference type="InterPro" id="IPR002616">
    <property type="entry name" value="tRNA_ribo_trans-like"/>
</dbReference>
<dbReference type="NCBIfam" id="TIGR00430">
    <property type="entry name" value="Q_tRNA_tgt"/>
    <property type="match status" value="1"/>
</dbReference>
<dbReference type="NCBIfam" id="TIGR00449">
    <property type="entry name" value="tgt_general"/>
    <property type="match status" value="1"/>
</dbReference>
<dbReference type="PANTHER" id="PTHR46499">
    <property type="entry name" value="QUEUINE TRNA-RIBOSYLTRANSFERASE"/>
    <property type="match status" value="1"/>
</dbReference>
<dbReference type="PANTHER" id="PTHR46499:SF1">
    <property type="entry name" value="QUEUINE TRNA-RIBOSYLTRANSFERASE"/>
    <property type="match status" value="1"/>
</dbReference>
<dbReference type="Pfam" id="PF01702">
    <property type="entry name" value="TGT"/>
    <property type="match status" value="1"/>
</dbReference>
<dbReference type="SUPFAM" id="SSF51713">
    <property type="entry name" value="tRNA-guanine transglycosylase"/>
    <property type="match status" value="1"/>
</dbReference>
<accession>A9M374</accession>
<sequence length="371" mass="41937">MLKFTLHKKDGYARRGTLELNHGKIETPVFMPVGTYGSVKAMNPQNLHDIKAQIILGNTYHLWLRPGLEVIGQFGGLHGFIGWDKPILTDSGGFQVFSLSDMRKLTEEGCTFKSPINGDKLFLSPEISMKIQTVLNSDIAMQLDECTPGEATREQARKSLQMSLRWAERSKKAFEDLKNPNALFGIVQGAMYEDLREESLRGLEQFDFPGLAVGGLSVGEPKPEMYRMLRAVGPILPEHKPHYLMGVGTPEDLVYGVAHGIDMFDCVMPTRNARNGWLFTRFGDLKIKNAKHKLDKRPIDESCTCYACQNFSRAYLHHLHRAGEILGAQLNTIHNLHFYQVIMAEMRDAIEQGKFADWQAQFHENRARGTD</sequence>
<feature type="chain" id="PRO_1000077012" description="Queuine tRNA-ribosyltransferase">
    <location>
        <begin position="1"/>
        <end position="371"/>
    </location>
</feature>
<feature type="region of interest" description="RNA binding" evidence="1">
    <location>
        <begin position="246"/>
        <end position="252"/>
    </location>
</feature>
<feature type="region of interest" description="RNA binding; important for wobble base 34 recognition" evidence="1">
    <location>
        <begin position="270"/>
        <end position="274"/>
    </location>
</feature>
<feature type="active site" description="Proton acceptor" evidence="1">
    <location>
        <position position="90"/>
    </location>
</feature>
<feature type="active site" description="Nucleophile" evidence="1">
    <location>
        <position position="265"/>
    </location>
</feature>
<feature type="binding site" evidence="1">
    <location>
        <begin position="90"/>
        <end position="94"/>
    </location>
    <ligand>
        <name>substrate</name>
    </ligand>
</feature>
<feature type="binding site" evidence="1">
    <location>
        <position position="144"/>
    </location>
    <ligand>
        <name>substrate</name>
    </ligand>
</feature>
<feature type="binding site" evidence="1">
    <location>
        <position position="188"/>
    </location>
    <ligand>
        <name>substrate</name>
    </ligand>
</feature>
<feature type="binding site" evidence="1">
    <location>
        <position position="215"/>
    </location>
    <ligand>
        <name>substrate</name>
    </ligand>
</feature>
<feature type="binding site" evidence="1">
    <location>
        <position position="303"/>
    </location>
    <ligand>
        <name>Zn(2+)</name>
        <dbReference type="ChEBI" id="CHEBI:29105"/>
    </ligand>
</feature>
<feature type="binding site" evidence="1">
    <location>
        <position position="305"/>
    </location>
    <ligand>
        <name>Zn(2+)</name>
        <dbReference type="ChEBI" id="CHEBI:29105"/>
    </ligand>
</feature>
<feature type="binding site" evidence="1">
    <location>
        <position position="308"/>
    </location>
    <ligand>
        <name>Zn(2+)</name>
        <dbReference type="ChEBI" id="CHEBI:29105"/>
    </ligand>
</feature>
<feature type="binding site" evidence="1">
    <location>
        <position position="334"/>
    </location>
    <ligand>
        <name>Zn(2+)</name>
        <dbReference type="ChEBI" id="CHEBI:29105"/>
    </ligand>
</feature>
<organism>
    <name type="scientific">Neisseria meningitidis serogroup C (strain 053442)</name>
    <dbReference type="NCBI Taxonomy" id="374833"/>
    <lineage>
        <taxon>Bacteria</taxon>
        <taxon>Pseudomonadati</taxon>
        <taxon>Pseudomonadota</taxon>
        <taxon>Betaproteobacteria</taxon>
        <taxon>Neisseriales</taxon>
        <taxon>Neisseriaceae</taxon>
        <taxon>Neisseria</taxon>
    </lineage>
</organism>
<name>TGT_NEIM0</name>
<keyword id="KW-0328">Glycosyltransferase</keyword>
<keyword id="KW-0479">Metal-binding</keyword>
<keyword id="KW-0671">Queuosine biosynthesis</keyword>
<keyword id="KW-0808">Transferase</keyword>
<keyword id="KW-0819">tRNA processing</keyword>
<keyword id="KW-0862">Zinc</keyword>